<sequence length="466" mass="50796">MATEGDKLLGGRFVGSTDPIMEILSSSISTEQRLTEVDIQASMAYAKALEKASILTKTELEKILSGLEKISEESSKGVLVMTQSDEDIQTAIERRLKELIGDIAGKLQTGRSRNEQVVTDLKLLLKSSISVISTHLLQLIKTLVERAAIEIDIIMPGYTHLQKALPIRWSQFLLSHAVALTRDSERLGEVKKRITVLPLGSGALAGNPLEIDRELLRSELDMTSITLNSIDAISERDFVVELISVATLLMIHLSKLAEDLIIFSTTEFGFVTLSDAYSTGSSLLPQKKNPDSLELIRSKAGRVFGRLAAILMVLKGIPSTFSKDLQEDKEAVLDVVDTLTAVLQVATGVISTLQVNKENMEKALTPELLSTDLALYLVRKGMPIRQAQTASGKAVHLAETKGITINNLTLEDLKSISPLFASDVSQVFSVVNSVEQYTAVGGTAKSSVTAQIEQLRELLKKQKEQA</sequence>
<protein>
    <recommendedName>
        <fullName>Delta-1 crystallin</fullName>
    </recommendedName>
    <alternativeName>
        <fullName>Delta crystallin I</fullName>
    </alternativeName>
</protein>
<proteinExistence type="evidence at protein level"/>
<accession>P02521</accession>
<accession>Q90814</accession>
<comment type="function">
    <text>Delta crystallin, the principal crystallin in embryonic lens, is found only in birds and reptiles.</text>
</comment>
<comment type="subunit">
    <text>Homotetramer.</text>
</comment>
<comment type="tissue specificity">
    <text evidence="1 2">Eye lens.</text>
</comment>
<comment type="PTM">
    <text>The N-terminus is blocked.</text>
</comment>
<comment type="similarity">
    <text evidence="3">Belongs to the lyase 1 family. Argininosuccinate lyase subfamily.</text>
</comment>
<keyword id="KW-0273">Eye lens protein</keyword>
<keyword id="KW-1185">Reference proteome</keyword>
<gene>
    <name type="primary">ASL1</name>
</gene>
<name>ARLY1_CHICK</name>
<evidence type="ECO:0000269" key="1">
    <source>
    </source>
</evidence>
<evidence type="ECO:0000269" key="2">
    <source>
    </source>
</evidence>
<evidence type="ECO:0000305" key="3"/>
<organism>
    <name type="scientific">Gallus gallus</name>
    <name type="common">Chicken</name>
    <dbReference type="NCBI Taxonomy" id="9031"/>
    <lineage>
        <taxon>Eukaryota</taxon>
        <taxon>Metazoa</taxon>
        <taxon>Chordata</taxon>
        <taxon>Craniata</taxon>
        <taxon>Vertebrata</taxon>
        <taxon>Euteleostomi</taxon>
        <taxon>Archelosauria</taxon>
        <taxon>Archosauria</taxon>
        <taxon>Dinosauria</taxon>
        <taxon>Saurischia</taxon>
        <taxon>Theropoda</taxon>
        <taxon>Coelurosauria</taxon>
        <taxon>Aves</taxon>
        <taxon>Neognathae</taxon>
        <taxon>Galloanserae</taxon>
        <taxon>Galliformes</taxon>
        <taxon>Phasianidae</taxon>
        <taxon>Phasianinae</taxon>
        <taxon>Gallus</taxon>
    </lineage>
</organism>
<dbReference type="EMBL" id="M10806">
    <property type="protein sequence ID" value="AAA48726.1"/>
    <property type="molecule type" value="Genomic_DNA"/>
</dbReference>
<dbReference type="EMBL" id="X02222">
    <property type="protein sequence ID" value="CAA26144.1"/>
    <property type="molecule type" value="Genomic_DNA"/>
</dbReference>
<dbReference type="EMBL" id="X00626">
    <property type="protein sequence ID" value="CAA25260.1"/>
    <property type="molecule type" value="mRNA"/>
</dbReference>
<dbReference type="EMBL" id="L29393">
    <property type="protein sequence ID" value="AAL58666.1"/>
    <property type="molecule type" value="Genomic_DNA"/>
</dbReference>
<dbReference type="EMBL" id="J00843">
    <property type="protein sequence ID" value="AAA48728.1"/>
    <property type="molecule type" value="mRNA"/>
</dbReference>
<dbReference type="EMBL" id="X02187">
    <property type="protein sequence ID" value="CAA26128.1"/>
    <property type="molecule type" value="Genomic_DNA"/>
</dbReference>
<dbReference type="PIR" id="A25712">
    <property type="entry name" value="CYCHD"/>
</dbReference>
<dbReference type="RefSeq" id="NP_990832.2">
    <property type="nucleotide sequence ID" value="NM_205501.2"/>
</dbReference>
<dbReference type="SMR" id="P02521"/>
<dbReference type="FunCoup" id="P02521">
    <property type="interactions" value="1494"/>
</dbReference>
<dbReference type="STRING" id="9031.ENSGALP00000039143"/>
<dbReference type="PaxDb" id="9031-ENSGALP00000039143"/>
<dbReference type="GeneID" id="396498"/>
<dbReference type="KEGG" id="gga:396498"/>
<dbReference type="CTD" id="396498"/>
<dbReference type="VEuPathDB" id="HostDB:geneid_396498"/>
<dbReference type="eggNOG" id="KOG1316">
    <property type="taxonomic scope" value="Eukaryota"/>
</dbReference>
<dbReference type="HOGENOM" id="CLU_027272_2_1_1"/>
<dbReference type="InParanoid" id="P02521"/>
<dbReference type="OrthoDB" id="2561043at2759"/>
<dbReference type="PhylomeDB" id="P02521"/>
<dbReference type="TreeFam" id="TF300656"/>
<dbReference type="Reactome" id="R-GGA-187630">
    <property type="pathway name" value="Arginine metabolism"/>
</dbReference>
<dbReference type="PRO" id="PR:P02521"/>
<dbReference type="Proteomes" id="UP000000539">
    <property type="component" value="Chromosome 19"/>
</dbReference>
<dbReference type="Bgee" id="ENSGALG00000002558">
    <property type="expression patterns" value="Expressed in liver and 11 other cell types or tissues"/>
</dbReference>
<dbReference type="GO" id="GO:0005829">
    <property type="term" value="C:cytosol"/>
    <property type="evidence" value="ECO:0000318"/>
    <property type="project" value="GO_Central"/>
</dbReference>
<dbReference type="GO" id="GO:0004056">
    <property type="term" value="F:argininosuccinate lyase activity"/>
    <property type="evidence" value="ECO:0000304"/>
    <property type="project" value="Reactome"/>
</dbReference>
<dbReference type="GO" id="GO:0005212">
    <property type="term" value="F:structural constituent of eye lens"/>
    <property type="evidence" value="ECO:0000304"/>
    <property type="project" value="UniProtKB"/>
</dbReference>
<dbReference type="GO" id="GO:0042450">
    <property type="term" value="P:arginine biosynthetic process via ornithine"/>
    <property type="evidence" value="ECO:0007669"/>
    <property type="project" value="InterPro"/>
</dbReference>
<dbReference type="GO" id="GO:0006525">
    <property type="term" value="P:arginine metabolic process"/>
    <property type="evidence" value="ECO:0000304"/>
    <property type="project" value="Reactome"/>
</dbReference>
<dbReference type="CDD" id="cd01359">
    <property type="entry name" value="Argininosuccinate_lyase"/>
    <property type="match status" value="1"/>
</dbReference>
<dbReference type="FunFam" id="1.10.275.10:FF:000002">
    <property type="entry name" value="Argininosuccinate lyase"/>
    <property type="match status" value="1"/>
</dbReference>
<dbReference type="FunFam" id="1.10.40.30:FF:000001">
    <property type="entry name" value="Argininosuccinate lyase"/>
    <property type="match status" value="1"/>
</dbReference>
<dbReference type="FunFam" id="1.20.200.10:FF:000002">
    <property type="entry name" value="Argininosuccinate lyase"/>
    <property type="match status" value="1"/>
</dbReference>
<dbReference type="FunFam" id="1.20.200.10:FF:000015">
    <property type="entry name" value="argininosuccinate lyase isoform X2"/>
    <property type="match status" value="1"/>
</dbReference>
<dbReference type="Gene3D" id="1.10.40.30">
    <property type="entry name" value="Fumarase/aspartase (C-terminal domain)"/>
    <property type="match status" value="1"/>
</dbReference>
<dbReference type="Gene3D" id="1.20.200.10">
    <property type="entry name" value="Fumarase/aspartase (Central domain)"/>
    <property type="match status" value="1"/>
</dbReference>
<dbReference type="Gene3D" id="1.10.275.10">
    <property type="entry name" value="Fumarase/aspartase (N-terminal domain)"/>
    <property type="match status" value="1"/>
</dbReference>
<dbReference type="HAMAP" id="MF_00006">
    <property type="entry name" value="Arg_succ_lyase"/>
    <property type="match status" value="1"/>
</dbReference>
<dbReference type="InterPro" id="IPR029419">
    <property type="entry name" value="Arg_succ_lyase_C"/>
</dbReference>
<dbReference type="InterPro" id="IPR009049">
    <property type="entry name" value="Argininosuccinate_lyase"/>
</dbReference>
<dbReference type="InterPro" id="IPR024083">
    <property type="entry name" value="Fumarase/histidase_N"/>
</dbReference>
<dbReference type="InterPro" id="IPR000362">
    <property type="entry name" value="Fumarate_lyase_fam"/>
</dbReference>
<dbReference type="InterPro" id="IPR022761">
    <property type="entry name" value="Fumarate_lyase_N"/>
</dbReference>
<dbReference type="InterPro" id="IPR008948">
    <property type="entry name" value="L-Aspartase-like"/>
</dbReference>
<dbReference type="NCBIfam" id="TIGR00838">
    <property type="entry name" value="argH"/>
    <property type="match status" value="1"/>
</dbReference>
<dbReference type="PANTHER" id="PTHR43814">
    <property type="entry name" value="ARGININOSUCCINATE LYASE"/>
    <property type="match status" value="1"/>
</dbReference>
<dbReference type="PANTHER" id="PTHR43814:SF1">
    <property type="entry name" value="ARGININOSUCCINATE LYASE"/>
    <property type="match status" value="1"/>
</dbReference>
<dbReference type="Pfam" id="PF14698">
    <property type="entry name" value="ASL_C2"/>
    <property type="match status" value="1"/>
</dbReference>
<dbReference type="Pfam" id="PF00206">
    <property type="entry name" value="Lyase_1"/>
    <property type="match status" value="1"/>
</dbReference>
<dbReference type="PRINTS" id="PR00145">
    <property type="entry name" value="ARGSUCLYASE"/>
</dbReference>
<dbReference type="PRINTS" id="PR00149">
    <property type="entry name" value="FUMRATELYASE"/>
</dbReference>
<dbReference type="SUPFAM" id="SSF48557">
    <property type="entry name" value="L-aspartase-like"/>
    <property type="match status" value="1"/>
</dbReference>
<feature type="initiator methionine" description="Removed">
    <location>
        <position position="1"/>
    </location>
</feature>
<feature type="chain" id="PRO_0000137719" description="Delta-1 crystallin">
    <location>
        <begin position="2"/>
        <end position="466"/>
    </location>
</feature>
<feature type="modified residue" description="Blocked amino end (Ala)" evidence="1">
    <location>
        <position position="2"/>
    </location>
</feature>
<feature type="sequence variant">
    <original>V</original>
    <variation>A</variation>
    <location>
        <position position="345"/>
    </location>
</feature>
<feature type="sequence conflict" description="In Ref. 3; CAA25260." evidence="3" ref="3">
    <original>V</original>
    <variation>L</variation>
    <location>
        <position position="118"/>
    </location>
</feature>
<feature type="sequence conflict" description="In Ref. 3; CAA25260." evidence="3" ref="3">
    <original>I</original>
    <variation>T</variation>
    <location>
        <position position="129"/>
    </location>
</feature>
<feature type="sequence conflict" description="In Ref. 3; CAA25260." evidence="3" ref="3">
    <original>S</original>
    <variation>F</variation>
    <location>
        <position position="274"/>
    </location>
</feature>
<feature type="sequence conflict" description="In Ref. 3; CAA25260." evidence="3" ref="3">
    <original>G</original>
    <variation>E</variation>
    <location>
        <position position="348"/>
    </location>
</feature>
<feature type="sequence conflict" description="In Ref. 4; AAA48728." evidence="3" ref="4">
    <original>T</original>
    <variation>H</variation>
    <location>
        <position position="443"/>
    </location>
</feature>
<feature type="sequence conflict" description="In Ref. 3; CAA25260 and 4; AAA48728." evidence="3" ref="3 4">
    <original>SS</original>
    <variation>AA</variation>
    <location>
        <begin position="446"/>
        <end position="447"/>
    </location>
</feature>
<reference key="1">
    <citation type="journal article" date="1985" name="J. Biol. Chem.">
        <title>The complete sequence of the chicken delta 1 crystallin gene and its 5' flanking region.</title>
        <authorList>
            <person name="Nickerson J.M."/>
            <person name="Wawrousek E.F."/>
            <person name="Hawkins J.W."/>
            <person name="Wakil A.S."/>
            <person name="Wistow G.J."/>
            <person name="Thomas G."/>
            <person name="Norman B.L."/>
            <person name="Piatigorsky J."/>
        </authorList>
    </citation>
    <scope>NUCLEOTIDE SEQUENCE [GENOMIC DNA]</scope>
</reference>
<reference key="2">
    <citation type="journal article" date="1985" name="Nucleic Acids Res.">
        <title>Nucleotide sequence of a chicken delta-crystallin gene.</title>
        <authorList>
            <person name="Ohno M."/>
            <person name="Sakamoto H."/>
            <person name="Yasuda K."/>
            <person name="Okada T.S."/>
            <person name="Shimura Y."/>
        </authorList>
    </citation>
    <scope>NUCLEOTIDE SEQUENCE [GENOMIC DNA]</scope>
</reference>
<reference key="3">
    <citation type="journal article" date="1984" name="EMBO J.">
        <title>The nucleotide sequence of a complete chicken delta-crystallin cDNA.</title>
        <authorList>
            <person name="Yasuda K."/>
            <person name="Nakajima N."/>
            <person name="Isobe T."/>
            <person name="Okada T.S."/>
            <person name="Shimura Y."/>
        </authorList>
    </citation>
    <scope>NUCLEOTIDE SEQUENCE [MRNA] OF 1-447</scope>
    <scope>TISSUE SPECIFICITY</scope>
    <scope>BLOCKAGE OF N-TERMINUS</scope>
    <source>
        <tissue>Lens</tissue>
    </source>
</reference>
<reference key="4">
    <citation type="journal article" date="1984" name="Proc. Natl. Acad. Sci. U.S.A.">
        <title>Sequence of a complete chicken delta-crystallin cDNA.</title>
        <authorList>
            <person name="Nickerson J.M."/>
            <person name="Piatigorsky J."/>
        </authorList>
    </citation>
    <scope>NUCLEOTIDE SEQUENCE [MRNA] OF 1-447</scope>
    <scope>TISSUE SPECIFICITY</scope>
    <source>
        <tissue>Lens</tissue>
    </source>
</reference>
<reference key="5">
    <citation type="journal article" date="1985" name="EMBO J.">
        <title>Structural and functional evidence for differential promoter activity of the two linked delta-crystallin genes in the chicken.</title>
        <authorList>
            <person name="Borras T."/>
            <person name="Nickerson J.M."/>
            <person name="Chepelinsky A.B."/>
            <person name="Piatigorsky J."/>
        </authorList>
    </citation>
    <scope>NUCLEOTIDE SEQUENCE [GENOMIC DNA] OF 1-4</scope>
    <source>
        <strain>White leghorn</strain>
    </source>
</reference>